<geneLocation type="plasmid">
    <name>sym pNGR234a</name>
</geneLocation>
<protein>
    <recommendedName>
        <fullName>Uncharacterized protein y4pG/y4sC</fullName>
    </recommendedName>
</protein>
<sequence length="192" mass="21094">MGSAVLLRDDFDGAALRQLARQTKDANQARRLLALAAIYDGGPRSDAARIGSVTLQIVRDWVLRFNARGPDGLVNGKAPGGRAKLNAAQRQALAKVVESGPIPAIHGVVRWRRKDLVQWIFQEFRISMDETTVGRELKALGFAKLSARPRHYAQNELEVDAFKKTSPPLWRKSEAGSRKARTSNSGGPTKRA</sequence>
<name>Y4PG_SINFN</name>
<keyword id="KW-0614">Plasmid</keyword>
<keyword id="KW-1185">Reference proteome</keyword>
<keyword id="KW-0814">Transposable element</keyword>
<dbReference type="EMBL" id="U00090">
    <property type="protein sequence ID" value="AAB91817.1"/>
    <property type="molecule type" value="Genomic_DNA"/>
</dbReference>
<dbReference type="EMBL" id="U00090">
    <property type="protein sequence ID" value="AAB91843.1"/>
    <property type="molecule type" value="Genomic_DNA"/>
</dbReference>
<dbReference type="RefSeq" id="NP_444020.1">
    <property type="nucleotide sequence ID" value="NC_000914.2"/>
</dbReference>
<dbReference type="RefSeq" id="NP_444056.1">
    <property type="nucleotide sequence ID" value="NC_000914.2"/>
</dbReference>
<dbReference type="KEGG" id="rhi:NGR_a01690"/>
<dbReference type="KEGG" id="rhi:NGR_a02050"/>
<dbReference type="PATRIC" id="fig|394.7.peg.163"/>
<dbReference type="eggNOG" id="COG3415">
    <property type="taxonomic scope" value="Bacteria"/>
</dbReference>
<dbReference type="HOGENOM" id="CLU_056788_3_0_5"/>
<dbReference type="OrthoDB" id="2375382at2"/>
<dbReference type="Proteomes" id="UP000001054">
    <property type="component" value="Plasmid pNGR234a"/>
</dbReference>
<dbReference type="InterPro" id="IPR009057">
    <property type="entry name" value="Homeodomain-like_sf"/>
</dbReference>
<dbReference type="InterPro" id="IPR025959">
    <property type="entry name" value="Winged_HTH_dom"/>
</dbReference>
<dbReference type="Pfam" id="PF13551">
    <property type="entry name" value="HTH_29"/>
    <property type="match status" value="1"/>
</dbReference>
<dbReference type="Pfam" id="PF13592">
    <property type="entry name" value="HTH_33"/>
    <property type="match status" value="1"/>
</dbReference>
<dbReference type="SUPFAM" id="SSF46689">
    <property type="entry name" value="Homeodomain-like"/>
    <property type="match status" value="1"/>
</dbReference>
<proteinExistence type="predicted"/>
<organism>
    <name type="scientific">Sinorhizobium fredii (strain NBRC 101917 / NGR234)</name>
    <dbReference type="NCBI Taxonomy" id="394"/>
    <lineage>
        <taxon>Bacteria</taxon>
        <taxon>Pseudomonadati</taxon>
        <taxon>Pseudomonadota</taxon>
        <taxon>Alphaproteobacteria</taxon>
        <taxon>Hyphomicrobiales</taxon>
        <taxon>Rhizobiaceae</taxon>
        <taxon>Sinorhizobium/Ensifer group</taxon>
        <taxon>Sinorhizobium</taxon>
    </lineage>
</organism>
<comment type="similarity">
    <text evidence="2">To A.xylinum IS1268 ORFA.</text>
</comment>
<evidence type="ECO:0000256" key="1">
    <source>
        <dbReference type="SAM" id="MobiDB-lite"/>
    </source>
</evidence>
<evidence type="ECO:0000305" key="2"/>
<accession>P55616</accession>
<feature type="chain" id="PRO_0000200935" description="Uncharacterized protein y4pG/y4sC">
    <location>
        <begin position="1"/>
        <end position="192"/>
    </location>
</feature>
<feature type="region of interest" description="Disordered" evidence="1">
    <location>
        <begin position="168"/>
        <end position="192"/>
    </location>
</feature>
<feature type="compositionally biased region" description="Polar residues" evidence="1">
    <location>
        <begin position="182"/>
        <end position="192"/>
    </location>
</feature>
<gene>
    <name type="ordered locus">NGR_a02050</name>
    <name type="ORF">y4pG</name>
</gene>
<gene>
    <name type="ordered locus">NGR_a01690</name>
    <name type="ORF">y4sC</name>
</gene>
<reference key="1">
    <citation type="journal article" date="1997" name="Nature">
        <title>Molecular basis of symbiosis between Rhizobium and legumes.</title>
        <authorList>
            <person name="Freiberg C.A."/>
            <person name="Fellay R."/>
            <person name="Bairoch A."/>
            <person name="Broughton W.J."/>
            <person name="Rosenthal A."/>
            <person name="Perret X."/>
        </authorList>
    </citation>
    <scope>NUCLEOTIDE SEQUENCE [LARGE SCALE GENOMIC DNA]</scope>
    <source>
        <strain>NBRC 101917 / NGR234</strain>
    </source>
</reference>
<reference key="2">
    <citation type="journal article" date="2009" name="Appl. Environ. Microbiol.">
        <title>Rhizobium sp. strain NGR234 possesses a remarkable number of secretion systems.</title>
        <authorList>
            <person name="Schmeisser C."/>
            <person name="Liesegang H."/>
            <person name="Krysciak D."/>
            <person name="Bakkou N."/>
            <person name="Le Quere A."/>
            <person name="Wollherr A."/>
            <person name="Heinemeyer I."/>
            <person name="Morgenstern B."/>
            <person name="Pommerening-Roeser A."/>
            <person name="Flores M."/>
            <person name="Palacios R."/>
            <person name="Brenner S."/>
            <person name="Gottschalk G."/>
            <person name="Schmitz R.A."/>
            <person name="Broughton W.J."/>
            <person name="Perret X."/>
            <person name="Strittmatter A.W."/>
            <person name="Streit W.R."/>
        </authorList>
    </citation>
    <scope>NUCLEOTIDE SEQUENCE [LARGE SCALE GENOMIC DNA]</scope>
    <source>
        <strain>NBRC 101917 / NGR234</strain>
    </source>
</reference>